<dbReference type="EMBL" id="AAFI02000004">
    <property type="protein sequence ID" value="EAL73085.1"/>
    <property type="molecule type" value="Genomic_DNA"/>
</dbReference>
<dbReference type="RefSeq" id="XP_646955.1">
    <property type="nucleotide sequence ID" value="XM_641863.1"/>
</dbReference>
<dbReference type="SMR" id="Q55ER5"/>
<dbReference type="FunCoup" id="Q55ER5">
    <property type="interactions" value="380"/>
</dbReference>
<dbReference type="STRING" id="44689.Q55ER5"/>
<dbReference type="PaxDb" id="44689-DDB0235160"/>
<dbReference type="EnsemblProtists" id="EAL73085">
    <property type="protein sequence ID" value="EAL73085"/>
    <property type="gene ID" value="DDB_G0268992"/>
</dbReference>
<dbReference type="GeneID" id="8616645"/>
<dbReference type="KEGG" id="ddi:DDB_G0268992"/>
<dbReference type="dictyBase" id="DDB_G0268992">
    <property type="gene designation" value="anapc10"/>
</dbReference>
<dbReference type="VEuPathDB" id="AmoebaDB:DDB_G0268992"/>
<dbReference type="eggNOG" id="KOG3437">
    <property type="taxonomic scope" value="Eukaryota"/>
</dbReference>
<dbReference type="HOGENOM" id="CLU_039415_3_1_1"/>
<dbReference type="InParanoid" id="Q55ER5"/>
<dbReference type="OMA" id="FITIEFP"/>
<dbReference type="PhylomeDB" id="Q55ER5"/>
<dbReference type="Reactome" id="R-DDI-141430">
    <property type="pathway name" value="Inactivation of APC/C via direct inhibition of the APC/C complex"/>
</dbReference>
<dbReference type="Reactome" id="R-DDI-174048">
    <property type="pathway name" value="APC/C:Cdc20 mediated degradation of Cyclin B"/>
</dbReference>
<dbReference type="Reactome" id="R-DDI-174084">
    <property type="pathway name" value="Autodegradation of Cdh1 by Cdh1:APC/C"/>
</dbReference>
<dbReference type="Reactome" id="R-DDI-174154">
    <property type="pathway name" value="APC/C:Cdc20 mediated degradation of Securin"/>
</dbReference>
<dbReference type="Reactome" id="R-DDI-174178">
    <property type="pathway name" value="APC/C:Cdh1 mediated degradation of Cdc20 and other APC/C:Cdh1 targeted proteins in late mitosis/early G1"/>
</dbReference>
<dbReference type="Reactome" id="R-DDI-174184">
    <property type="pathway name" value="Cdc20:Phospho-APC/C mediated degradation of Cyclin A"/>
</dbReference>
<dbReference type="Reactome" id="R-DDI-176407">
    <property type="pathway name" value="Conversion from APC/C:Cdc20 to APC/C:Cdh1 in late anaphase"/>
</dbReference>
<dbReference type="Reactome" id="R-DDI-176408">
    <property type="pathway name" value="Regulation of APC/C activators between G1/S and early anaphase"/>
</dbReference>
<dbReference type="Reactome" id="R-DDI-176409">
    <property type="pathway name" value="APC/C:Cdc20 mediated degradation of mitotic proteins"/>
</dbReference>
<dbReference type="Reactome" id="R-DDI-176412">
    <property type="pathway name" value="Phosphorylation of the APC/C"/>
</dbReference>
<dbReference type="Reactome" id="R-DDI-179409">
    <property type="pathway name" value="APC-Cdc20 mediated degradation of Nek2A"/>
</dbReference>
<dbReference type="Reactome" id="R-DDI-2467813">
    <property type="pathway name" value="Separation of Sister Chromatids"/>
</dbReference>
<dbReference type="Reactome" id="R-DDI-2559582">
    <property type="pathway name" value="Senescence-Associated Secretory Phenotype (SASP)"/>
</dbReference>
<dbReference type="Reactome" id="R-DDI-69017">
    <property type="pathway name" value="CDK-mediated phosphorylation and removal of Cdc6"/>
</dbReference>
<dbReference type="Reactome" id="R-DDI-983168">
    <property type="pathway name" value="Antigen processing: Ubiquitination &amp; Proteasome degradation"/>
</dbReference>
<dbReference type="UniPathway" id="UPA00143"/>
<dbReference type="PRO" id="PR:Q55ER5"/>
<dbReference type="Proteomes" id="UP000002195">
    <property type="component" value="Chromosome 1"/>
</dbReference>
<dbReference type="GO" id="GO:0005680">
    <property type="term" value="C:anaphase-promoting complex"/>
    <property type="evidence" value="ECO:0000318"/>
    <property type="project" value="GO_Central"/>
</dbReference>
<dbReference type="GO" id="GO:0031145">
    <property type="term" value="P:anaphase-promoting complex-dependent catabolic process"/>
    <property type="evidence" value="ECO:0007669"/>
    <property type="project" value="InterPro"/>
</dbReference>
<dbReference type="GO" id="GO:0051301">
    <property type="term" value="P:cell division"/>
    <property type="evidence" value="ECO:0007669"/>
    <property type="project" value="UniProtKB-KW"/>
</dbReference>
<dbReference type="GO" id="GO:0070979">
    <property type="term" value="P:protein K11-linked ubiquitination"/>
    <property type="evidence" value="ECO:0000318"/>
    <property type="project" value="GO_Central"/>
</dbReference>
<dbReference type="CDD" id="cd08366">
    <property type="entry name" value="APC10"/>
    <property type="match status" value="1"/>
</dbReference>
<dbReference type="FunFam" id="2.60.120.260:FF:000122">
    <property type="entry name" value="Anaphase-promoting complex subunit 10"/>
    <property type="match status" value="1"/>
</dbReference>
<dbReference type="Gene3D" id="2.60.120.260">
    <property type="entry name" value="Galactose-binding domain-like"/>
    <property type="match status" value="1"/>
</dbReference>
<dbReference type="InterPro" id="IPR016901">
    <property type="entry name" value="APC10/Doc1"/>
</dbReference>
<dbReference type="InterPro" id="IPR004939">
    <property type="entry name" value="APC_su10/DOC_dom"/>
</dbReference>
<dbReference type="InterPro" id="IPR008979">
    <property type="entry name" value="Galactose-bd-like_sf"/>
</dbReference>
<dbReference type="PANTHER" id="PTHR12936">
    <property type="entry name" value="ANAPHASE-PROMOTING COMPLEX 10"/>
    <property type="match status" value="1"/>
</dbReference>
<dbReference type="PANTHER" id="PTHR12936:SF0">
    <property type="entry name" value="ANAPHASE-PROMOTING COMPLEX SUBUNIT 10"/>
    <property type="match status" value="1"/>
</dbReference>
<dbReference type="Pfam" id="PF03256">
    <property type="entry name" value="ANAPC10"/>
    <property type="match status" value="1"/>
</dbReference>
<dbReference type="PIRSF" id="PIRSF028841">
    <property type="entry name" value="APC10_sub"/>
    <property type="match status" value="1"/>
</dbReference>
<dbReference type="SMART" id="SM01337">
    <property type="entry name" value="APC10"/>
    <property type="match status" value="1"/>
</dbReference>
<dbReference type="SUPFAM" id="SSF49785">
    <property type="entry name" value="Galactose-binding domain-like"/>
    <property type="match status" value="1"/>
</dbReference>
<dbReference type="PROSITE" id="PS51284">
    <property type="entry name" value="DOC"/>
    <property type="match status" value="1"/>
</dbReference>
<organism>
    <name type="scientific">Dictyostelium discoideum</name>
    <name type="common">Social amoeba</name>
    <dbReference type="NCBI Taxonomy" id="44689"/>
    <lineage>
        <taxon>Eukaryota</taxon>
        <taxon>Amoebozoa</taxon>
        <taxon>Evosea</taxon>
        <taxon>Eumycetozoa</taxon>
        <taxon>Dictyostelia</taxon>
        <taxon>Dictyosteliales</taxon>
        <taxon>Dictyosteliaceae</taxon>
        <taxon>Dictyostelium</taxon>
    </lineage>
</organism>
<protein>
    <recommendedName>
        <fullName>Anaphase-promoting complex subunit 10</fullName>
        <shortName>APC10</shortName>
    </recommendedName>
</protein>
<sequence>MIKNSNINSNSRLDDPILQEIELNKVEIGKHASWSVSSAKPGSGVEQLRDNNLDTFWQSDAQQPHHITIQFPKKCYIENLLIHCDYKLDESYTPCKISIKAGTILHDLQEIILTELEEPSGWINIPLSFNNNSLKANLLQISILSNLKNGRDSHIRQIKVYGKKISIENYTQYPKFNSPEVSMFQTLR</sequence>
<feature type="chain" id="PRO_0000328532" description="Anaphase-promoting complex subunit 10">
    <location>
        <begin position="1"/>
        <end position="188"/>
    </location>
</feature>
<feature type="domain" description="DOC" evidence="2">
    <location>
        <begin position="4"/>
        <end position="187"/>
    </location>
</feature>
<comment type="function">
    <text evidence="1">Component of the anaphase promoting complex/cyclosome (APC/C), a cell cycle-regulated E3 ubiquitin-protein ligase complex that controls progression through mitosis and the G1 phase of the cell cycle.</text>
</comment>
<comment type="pathway">
    <text>Protein modification; protein ubiquitination.</text>
</comment>
<comment type="subunit">
    <text evidence="1">The APC/C is composed of at least 13 subunits that stay tightly associated throughout the cell cycle: anapc1, anapc2, anapc3, anapc4, anapc5, anapc6, anapc7, anapc8, anapc10, anapc11, cdc20, cdc26 and cdh1.</text>
</comment>
<comment type="subcellular location">
    <subcellularLocation>
        <location evidence="1">Nucleus</location>
    </subcellularLocation>
</comment>
<comment type="similarity">
    <text evidence="3">Belongs to the APC10 family.</text>
</comment>
<name>APC10_DICDI</name>
<accession>Q55ER5</accession>
<evidence type="ECO:0000250" key="1"/>
<evidence type="ECO:0000255" key="2">
    <source>
        <dbReference type="PROSITE-ProRule" id="PRU00614"/>
    </source>
</evidence>
<evidence type="ECO:0000305" key="3"/>
<reference key="1">
    <citation type="journal article" date="2005" name="Nature">
        <title>The genome of the social amoeba Dictyostelium discoideum.</title>
        <authorList>
            <person name="Eichinger L."/>
            <person name="Pachebat J.A."/>
            <person name="Gloeckner G."/>
            <person name="Rajandream M.A."/>
            <person name="Sucgang R."/>
            <person name="Berriman M."/>
            <person name="Song J."/>
            <person name="Olsen R."/>
            <person name="Szafranski K."/>
            <person name="Xu Q."/>
            <person name="Tunggal B."/>
            <person name="Kummerfeld S."/>
            <person name="Madera M."/>
            <person name="Konfortov B.A."/>
            <person name="Rivero F."/>
            <person name="Bankier A.T."/>
            <person name="Lehmann R."/>
            <person name="Hamlin N."/>
            <person name="Davies R."/>
            <person name="Gaudet P."/>
            <person name="Fey P."/>
            <person name="Pilcher K."/>
            <person name="Chen G."/>
            <person name="Saunders D."/>
            <person name="Sodergren E.J."/>
            <person name="Davis P."/>
            <person name="Kerhornou A."/>
            <person name="Nie X."/>
            <person name="Hall N."/>
            <person name="Anjard C."/>
            <person name="Hemphill L."/>
            <person name="Bason N."/>
            <person name="Farbrother P."/>
            <person name="Desany B."/>
            <person name="Just E."/>
            <person name="Morio T."/>
            <person name="Rost R."/>
            <person name="Churcher C.M."/>
            <person name="Cooper J."/>
            <person name="Haydock S."/>
            <person name="van Driessche N."/>
            <person name="Cronin A."/>
            <person name="Goodhead I."/>
            <person name="Muzny D.M."/>
            <person name="Mourier T."/>
            <person name="Pain A."/>
            <person name="Lu M."/>
            <person name="Harper D."/>
            <person name="Lindsay R."/>
            <person name="Hauser H."/>
            <person name="James K.D."/>
            <person name="Quiles M."/>
            <person name="Madan Babu M."/>
            <person name="Saito T."/>
            <person name="Buchrieser C."/>
            <person name="Wardroper A."/>
            <person name="Felder M."/>
            <person name="Thangavelu M."/>
            <person name="Johnson D."/>
            <person name="Knights A."/>
            <person name="Loulseged H."/>
            <person name="Mungall K.L."/>
            <person name="Oliver K."/>
            <person name="Price C."/>
            <person name="Quail M.A."/>
            <person name="Urushihara H."/>
            <person name="Hernandez J."/>
            <person name="Rabbinowitsch E."/>
            <person name="Steffen D."/>
            <person name="Sanders M."/>
            <person name="Ma J."/>
            <person name="Kohara Y."/>
            <person name="Sharp S."/>
            <person name="Simmonds M.N."/>
            <person name="Spiegler S."/>
            <person name="Tivey A."/>
            <person name="Sugano S."/>
            <person name="White B."/>
            <person name="Walker D."/>
            <person name="Woodward J.R."/>
            <person name="Winckler T."/>
            <person name="Tanaka Y."/>
            <person name="Shaulsky G."/>
            <person name="Schleicher M."/>
            <person name="Weinstock G.M."/>
            <person name="Rosenthal A."/>
            <person name="Cox E.C."/>
            <person name="Chisholm R.L."/>
            <person name="Gibbs R.A."/>
            <person name="Loomis W.F."/>
            <person name="Platzer M."/>
            <person name="Kay R.R."/>
            <person name="Williams J.G."/>
            <person name="Dear P.H."/>
            <person name="Noegel A.A."/>
            <person name="Barrell B.G."/>
            <person name="Kuspa A."/>
        </authorList>
    </citation>
    <scope>NUCLEOTIDE SEQUENCE [LARGE SCALE GENOMIC DNA]</scope>
    <source>
        <strain>AX4</strain>
    </source>
</reference>
<keyword id="KW-0131">Cell cycle</keyword>
<keyword id="KW-0132">Cell division</keyword>
<keyword id="KW-0498">Mitosis</keyword>
<keyword id="KW-0539">Nucleus</keyword>
<keyword id="KW-1185">Reference proteome</keyword>
<keyword id="KW-0833">Ubl conjugation pathway</keyword>
<proteinExistence type="inferred from homology"/>
<gene>
    <name type="primary">anapc10</name>
    <name type="synonym">apc10</name>
    <name type="ORF">DDB_G0268992</name>
</gene>